<organism>
    <name type="scientific">Shewanella sp. (strain MR-7)</name>
    <dbReference type="NCBI Taxonomy" id="60481"/>
    <lineage>
        <taxon>Bacteria</taxon>
        <taxon>Pseudomonadati</taxon>
        <taxon>Pseudomonadota</taxon>
        <taxon>Gammaproteobacteria</taxon>
        <taxon>Alteromonadales</taxon>
        <taxon>Shewanellaceae</taxon>
        <taxon>Shewanella</taxon>
    </lineage>
</organism>
<evidence type="ECO:0000255" key="1">
    <source>
        <dbReference type="HAMAP-Rule" id="MF_01031"/>
    </source>
</evidence>
<accession>Q0HZT1</accession>
<keyword id="KW-0028">Amino-acid biosynthesis</keyword>
<keyword id="KW-0100">Branched-chain amino acid biosynthesis</keyword>
<keyword id="KW-0432">Leucine biosynthesis</keyword>
<keyword id="KW-0456">Lyase</keyword>
<reference key="1">
    <citation type="submission" date="2006-08" db="EMBL/GenBank/DDBJ databases">
        <title>Complete sequence of chromosome 1 of Shewanella sp. MR-7.</title>
        <authorList>
            <person name="Copeland A."/>
            <person name="Lucas S."/>
            <person name="Lapidus A."/>
            <person name="Barry K."/>
            <person name="Detter J.C."/>
            <person name="Glavina del Rio T."/>
            <person name="Hammon N."/>
            <person name="Israni S."/>
            <person name="Dalin E."/>
            <person name="Tice H."/>
            <person name="Pitluck S."/>
            <person name="Kiss H."/>
            <person name="Brettin T."/>
            <person name="Bruce D."/>
            <person name="Han C."/>
            <person name="Tapia R."/>
            <person name="Gilna P."/>
            <person name="Schmutz J."/>
            <person name="Larimer F."/>
            <person name="Land M."/>
            <person name="Hauser L."/>
            <person name="Kyrpides N."/>
            <person name="Mikhailova N."/>
            <person name="Nealson K."/>
            <person name="Konstantinidis K."/>
            <person name="Klappenbach J."/>
            <person name="Tiedje J."/>
            <person name="Richardson P."/>
        </authorList>
    </citation>
    <scope>NUCLEOTIDE SEQUENCE [LARGE SCALE GENOMIC DNA]</scope>
    <source>
        <strain>MR-7</strain>
    </source>
</reference>
<comment type="function">
    <text evidence="1">Catalyzes the isomerization between 2-isopropylmalate and 3-isopropylmalate, via the formation of 2-isopropylmaleate.</text>
</comment>
<comment type="catalytic activity">
    <reaction evidence="1">
        <text>(2R,3S)-3-isopropylmalate = (2S)-2-isopropylmalate</text>
        <dbReference type="Rhea" id="RHEA:32287"/>
        <dbReference type="ChEBI" id="CHEBI:1178"/>
        <dbReference type="ChEBI" id="CHEBI:35121"/>
        <dbReference type="EC" id="4.2.1.33"/>
    </reaction>
</comment>
<comment type="pathway">
    <text evidence="1">Amino-acid biosynthesis; L-leucine biosynthesis; L-leucine from 3-methyl-2-oxobutanoate: step 2/4.</text>
</comment>
<comment type="subunit">
    <text evidence="1">Heterodimer of LeuC and LeuD.</text>
</comment>
<comment type="similarity">
    <text evidence="1">Belongs to the LeuD family. LeuD type 1 subfamily.</text>
</comment>
<gene>
    <name evidence="1" type="primary">leuD</name>
    <name type="ordered locus">Shewmr7_0371</name>
</gene>
<dbReference type="EC" id="4.2.1.33" evidence="1"/>
<dbReference type="EMBL" id="CP000444">
    <property type="protein sequence ID" value="ABI41374.1"/>
    <property type="molecule type" value="Genomic_DNA"/>
</dbReference>
<dbReference type="SMR" id="Q0HZT1"/>
<dbReference type="KEGG" id="shm:Shewmr7_0371"/>
<dbReference type="HOGENOM" id="CLU_081378_0_3_6"/>
<dbReference type="UniPathway" id="UPA00048">
    <property type="reaction ID" value="UER00071"/>
</dbReference>
<dbReference type="GO" id="GO:0009316">
    <property type="term" value="C:3-isopropylmalate dehydratase complex"/>
    <property type="evidence" value="ECO:0007669"/>
    <property type="project" value="InterPro"/>
</dbReference>
<dbReference type="GO" id="GO:0003861">
    <property type="term" value="F:3-isopropylmalate dehydratase activity"/>
    <property type="evidence" value="ECO:0007669"/>
    <property type="project" value="UniProtKB-UniRule"/>
</dbReference>
<dbReference type="GO" id="GO:0009098">
    <property type="term" value="P:L-leucine biosynthetic process"/>
    <property type="evidence" value="ECO:0007669"/>
    <property type="project" value="UniProtKB-UniRule"/>
</dbReference>
<dbReference type="CDD" id="cd01577">
    <property type="entry name" value="IPMI_Swivel"/>
    <property type="match status" value="1"/>
</dbReference>
<dbReference type="FunFam" id="3.20.19.10:FF:000003">
    <property type="entry name" value="3-isopropylmalate dehydratase small subunit"/>
    <property type="match status" value="1"/>
</dbReference>
<dbReference type="Gene3D" id="3.20.19.10">
    <property type="entry name" value="Aconitase, domain 4"/>
    <property type="match status" value="1"/>
</dbReference>
<dbReference type="HAMAP" id="MF_01031">
    <property type="entry name" value="LeuD_type1"/>
    <property type="match status" value="1"/>
</dbReference>
<dbReference type="InterPro" id="IPR004431">
    <property type="entry name" value="3-IsopropMal_deHydase_ssu"/>
</dbReference>
<dbReference type="InterPro" id="IPR015928">
    <property type="entry name" value="Aconitase/3IPM_dehydase_swvl"/>
</dbReference>
<dbReference type="InterPro" id="IPR000573">
    <property type="entry name" value="AconitaseA/IPMdHydase_ssu_swvl"/>
</dbReference>
<dbReference type="InterPro" id="IPR033940">
    <property type="entry name" value="IPMI_Swivel"/>
</dbReference>
<dbReference type="InterPro" id="IPR050075">
    <property type="entry name" value="LeuD"/>
</dbReference>
<dbReference type="NCBIfam" id="TIGR00171">
    <property type="entry name" value="leuD"/>
    <property type="match status" value="1"/>
</dbReference>
<dbReference type="NCBIfam" id="NF002458">
    <property type="entry name" value="PRK01641.1"/>
    <property type="match status" value="1"/>
</dbReference>
<dbReference type="PANTHER" id="PTHR43345:SF5">
    <property type="entry name" value="3-ISOPROPYLMALATE DEHYDRATASE SMALL SUBUNIT"/>
    <property type="match status" value="1"/>
</dbReference>
<dbReference type="PANTHER" id="PTHR43345">
    <property type="entry name" value="3-ISOPROPYLMALATE DEHYDRATASE SMALL SUBUNIT 2-RELATED-RELATED"/>
    <property type="match status" value="1"/>
</dbReference>
<dbReference type="Pfam" id="PF00694">
    <property type="entry name" value="Aconitase_C"/>
    <property type="match status" value="1"/>
</dbReference>
<dbReference type="SUPFAM" id="SSF52016">
    <property type="entry name" value="LeuD/IlvD-like"/>
    <property type="match status" value="1"/>
</dbReference>
<name>LEUD_SHESR</name>
<proteinExistence type="inferred from homology"/>
<feature type="chain" id="PRO_1000063839" description="3-isopropylmalate dehydratase small subunit">
    <location>
        <begin position="1"/>
        <end position="201"/>
    </location>
</feature>
<protein>
    <recommendedName>
        <fullName evidence="1">3-isopropylmalate dehydratase small subunit</fullName>
        <ecNumber evidence="1">4.2.1.33</ecNumber>
    </recommendedName>
    <alternativeName>
        <fullName evidence="1">Alpha-IPM isomerase</fullName>
        <shortName evidence="1">IPMI</shortName>
    </alternativeName>
    <alternativeName>
        <fullName evidence="1">Isopropylmalate isomerase</fullName>
    </alternativeName>
</protein>
<sequence length="201" mass="22022">MQPFTSHTGLAVMIDSANIDTDQIIPKQFLSKVTRDGFGVHLFHDWRYLDDAGDVPNPDFTLNKPRYRGASILLAQENFGCGSSREHAPWALADFGLRAIIAPSFADIFYGNSINNGLLPVKLSANEVRQLMDEVASEEGAQITVDLTTCKVISPSGAEFSFTLAESARHKLLNGLDAIGLTLSHGTQIGEYEANIPSWRR</sequence>